<protein>
    <recommendedName>
        <fullName evidence="3">Cilia- and flagella-associated protein 300</fullName>
    </recommendedName>
</protein>
<name>CF300_RAT</name>
<dbReference type="EMBL" id="BC079425">
    <property type="protein sequence ID" value="AAH79425.1"/>
    <property type="molecule type" value="mRNA"/>
</dbReference>
<dbReference type="RefSeq" id="NP_001034263.1">
    <property type="nucleotide sequence ID" value="NM_001039174.1"/>
</dbReference>
<dbReference type="FunCoup" id="Q68FQ4">
    <property type="interactions" value="649"/>
</dbReference>
<dbReference type="STRING" id="10116.ENSRNOP00000061520"/>
<dbReference type="PhosphoSitePlus" id="Q68FQ4"/>
<dbReference type="PaxDb" id="10116-ENSRNOP00000061520"/>
<dbReference type="GeneID" id="654482"/>
<dbReference type="KEGG" id="rno:654482"/>
<dbReference type="UCSC" id="RGD:1591894">
    <property type="organism name" value="rat"/>
</dbReference>
<dbReference type="AGR" id="RGD:1591894"/>
<dbReference type="CTD" id="85016"/>
<dbReference type="RGD" id="1591894">
    <property type="gene designation" value="Cfap300"/>
</dbReference>
<dbReference type="VEuPathDB" id="HostDB:ENSRNOG00000043410"/>
<dbReference type="eggNOG" id="ENOG502QUFH">
    <property type="taxonomic scope" value="Eukaryota"/>
</dbReference>
<dbReference type="HOGENOM" id="CLU_068703_0_0_1"/>
<dbReference type="InParanoid" id="Q68FQ4"/>
<dbReference type="OrthoDB" id="2744at9989"/>
<dbReference type="PhylomeDB" id="Q68FQ4"/>
<dbReference type="TreeFam" id="TF329188"/>
<dbReference type="PRO" id="PR:Q68FQ4"/>
<dbReference type="Proteomes" id="UP000002494">
    <property type="component" value="Chromosome 8"/>
</dbReference>
<dbReference type="Bgee" id="ENSRNOG00000043410">
    <property type="expression patterns" value="Expressed in testis and 18 other cell types or tissues"/>
</dbReference>
<dbReference type="GO" id="GO:0005737">
    <property type="term" value="C:cytoplasm"/>
    <property type="evidence" value="ECO:0000250"/>
    <property type="project" value="UniProtKB"/>
</dbReference>
<dbReference type="GO" id="GO:0005856">
    <property type="term" value="C:cytoskeleton"/>
    <property type="evidence" value="ECO:0007669"/>
    <property type="project" value="UniProtKB-KW"/>
</dbReference>
<dbReference type="GO" id="GO:0031514">
    <property type="term" value="C:motile cilium"/>
    <property type="evidence" value="ECO:0000250"/>
    <property type="project" value="UniProtKB"/>
</dbReference>
<dbReference type="InterPro" id="IPR029416">
    <property type="entry name" value="CFAP300"/>
</dbReference>
<dbReference type="PANTHER" id="PTHR31078">
    <property type="entry name" value="CILIA- AND FLAGELLA-ASSOCIATED PROTEIN 300"/>
    <property type="match status" value="1"/>
</dbReference>
<dbReference type="PANTHER" id="PTHR31078:SF1">
    <property type="entry name" value="CILIA- AND FLAGELLA-ASSOCIATED PROTEIN 300"/>
    <property type="match status" value="1"/>
</dbReference>
<dbReference type="Pfam" id="PF14926">
    <property type="entry name" value="CFAP300"/>
    <property type="match status" value="1"/>
</dbReference>
<reference key="1">
    <citation type="journal article" date="2004" name="Genome Res.">
        <title>The status, quality, and expansion of the NIH full-length cDNA project: the Mammalian Gene Collection (MGC).</title>
        <authorList>
            <consortium name="The MGC Project Team"/>
        </authorList>
    </citation>
    <scope>NUCLEOTIDE SEQUENCE [LARGE SCALE MRNA]</scope>
    <source>
        <tissue>Testis</tissue>
    </source>
</reference>
<sequence>MATGEPRDRGGYYFRFLPQRTFSSLSAREITNRLRQWSMLGRIQAQAFGFDQTFQPYQKDDFVTAFFKDPNVIPHLQLLAESSGQWTTLGTEVKRIEAINVPCTQLSMSFFQRLYDENIVRESGHIVKCLDSFCDPFLISDELRKVLLMEDSEKYEVFSPVEREEFLFCLFKHLCLGGSLCQYEDVLKPYLETAKLIYKDLVSVRKHPRTKEIQITSSVFKVKAYDSLGVCYPSPKEHEQTFSYFVVDPIKRHVNVLYHCYGVGEMA</sequence>
<keyword id="KW-0966">Cell projection</keyword>
<keyword id="KW-0963">Cytoplasm</keyword>
<keyword id="KW-0206">Cytoskeleton</keyword>
<keyword id="KW-1185">Reference proteome</keyword>
<gene>
    <name evidence="4" type="primary">Cfap300</name>
</gene>
<organism>
    <name type="scientific">Rattus norvegicus</name>
    <name type="common">Rat</name>
    <dbReference type="NCBI Taxonomy" id="10116"/>
    <lineage>
        <taxon>Eukaryota</taxon>
        <taxon>Metazoa</taxon>
        <taxon>Chordata</taxon>
        <taxon>Craniata</taxon>
        <taxon>Vertebrata</taxon>
        <taxon>Euteleostomi</taxon>
        <taxon>Mammalia</taxon>
        <taxon>Eutheria</taxon>
        <taxon>Euarchontoglires</taxon>
        <taxon>Glires</taxon>
        <taxon>Rodentia</taxon>
        <taxon>Myomorpha</taxon>
        <taxon>Muroidea</taxon>
        <taxon>Muridae</taxon>
        <taxon>Murinae</taxon>
        <taxon>Rattus</taxon>
    </lineage>
</organism>
<proteinExistence type="evidence at transcript level"/>
<evidence type="ECO:0000250" key="1">
    <source>
        <dbReference type="UniProtKB" id="A0CY51"/>
    </source>
</evidence>
<evidence type="ECO:0000250" key="2">
    <source>
        <dbReference type="UniProtKB" id="Q9BRQ4"/>
    </source>
</evidence>
<evidence type="ECO:0000305" key="3"/>
<evidence type="ECO:0000312" key="4">
    <source>
        <dbReference type="RGD" id="1591894"/>
    </source>
</evidence>
<accession>Q68FQ4</accession>
<comment type="function">
    <text evidence="1">Cilium- and flagellum-specific protein that plays a role in axonemal structure organization and motility. May play a role in outer and inner dynein arm assembly.</text>
</comment>
<comment type="subunit">
    <text evidence="2">Interacts with DNAAF2.</text>
</comment>
<comment type="subcellular location">
    <subcellularLocation>
        <location evidence="1">Cytoplasm</location>
    </subcellularLocation>
    <subcellularLocation>
        <location evidence="1">Cytoplasm</location>
        <location evidence="1">Cytoskeleton</location>
        <location evidence="1">Cilium axoneme</location>
    </subcellularLocation>
</comment>
<comment type="similarity">
    <text evidence="3">Belongs to the CFAP300 family.</text>
</comment>
<feature type="chain" id="PRO_0000274277" description="Cilia- and flagella-associated protein 300">
    <location>
        <begin position="1"/>
        <end position="267"/>
    </location>
</feature>